<name>WECG_PHOLL</name>
<keyword id="KW-0328">Glycosyltransferase</keyword>
<keyword id="KW-1185">Reference proteome</keyword>
<keyword id="KW-0808">Transferase</keyword>
<accession>Q7MYM6</accession>
<dbReference type="EC" id="2.4.1.180" evidence="1"/>
<dbReference type="EMBL" id="BX571874">
    <property type="protein sequence ID" value="CAE17023.1"/>
    <property type="molecule type" value="Genomic_DNA"/>
</dbReference>
<dbReference type="RefSeq" id="WP_011148721.1">
    <property type="nucleotide sequence ID" value="NC_005126.1"/>
</dbReference>
<dbReference type="SMR" id="Q7MYM6"/>
<dbReference type="STRING" id="243265.plu4651"/>
<dbReference type="CAZy" id="GT26">
    <property type="family name" value="Glycosyltransferase Family 26"/>
</dbReference>
<dbReference type="GeneID" id="48850868"/>
<dbReference type="KEGG" id="plu:plu4651"/>
<dbReference type="eggNOG" id="COG1922">
    <property type="taxonomic scope" value="Bacteria"/>
</dbReference>
<dbReference type="HOGENOM" id="CLU_063203_3_2_6"/>
<dbReference type="OrthoDB" id="9808602at2"/>
<dbReference type="UniPathway" id="UPA00566"/>
<dbReference type="Proteomes" id="UP000002514">
    <property type="component" value="Chromosome"/>
</dbReference>
<dbReference type="GO" id="GO:0047241">
    <property type="term" value="F:lipopolysaccharide N-acetylmannosaminouronosyltransferase activity"/>
    <property type="evidence" value="ECO:0007669"/>
    <property type="project" value="UniProtKB-UniRule"/>
</dbReference>
<dbReference type="GO" id="GO:0009246">
    <property type="term" value="P:enterobacterial common antigen biosynthetic process"/>
    <property type="evidence" value="ECO:0007669"/>
    <property type="project" value="UniProtKB-UniRule"/>
</dbReference>
<dbReference type="CDD" id="cd06533">
    <property type="entry name" value="Glyco_transf_WecG_TagA"/>
    <property type="match status" value="1"/>
</dbReference>
<dbReference type="HAMAP" id="MF_01001">
    <property type="entry name" value="WecG_RffM"/>
    <property type="match status" value="1"/>
</dbReference>
<dbReference type="InterPro" id="IPR023085">
    <property type="entry name" value="UDP-ManNAcA_Trfase_WecG"/>
</dbReference>
<dbReference type="InterPro" id="IPR004629">
    <property type="entry name" value="WecG_TagA_CpsF"/>
</dbReference>
<dbReference type="NCBIfam" id="NF002980">
    <property type="entry name" value="PRK03692.1"/>
    <property type="match status" value="1"/>
</dbReference>
<dbReference type="NCBIfam" id="TIGR00696">
    <property type="entry name" value="wecG_tagA_cpsF"/>
    <property type="match status" value="1"/>
</dbReference>
<dbReference type="PANTHER" id="PTHR34136">
    <property type="match status" value="1"/>
</dbReference>
<dbReference type="PANTHER" id="PTHR34136:SF1">
    <property type="entry name" value="UDP-N-ACETYL-D-MANNOSAMINURONIC ACID TRANSFERASE"/>
    <property type="match status" value="1"/>
</dbReference>
<dbReference type="Pfam" id="PF03808">
    <property type="entry name" value="Glyco_tran_WecG"/>
    <property type="match status" value="1"/>
</dbReference>
<proteinExistence type="inferred from homology"/>
<comment type="function">
    <text evidence="1">Catalyzes the synthesis of Und-PP-GlcNAc-ManNAcA (Lipid II), the second lipid-linked intermediate involved in enterobacterial common antigen (ECA) synthesis.</text>
</comment>
<comment type="catalytic activity">
    <reaction evidence="1">
        <text>UDP-N-acetyl-alpha-D-mannosaminouronate + N-acetyl-alpha-D-glucosaminyl-di-trans,octa-cis-undecaprenyl diphosphate = beta-D-ManNAcA-(1-&gt;4)-alpha-D-GlcNAc-di-trans,octa-cis-undecaprenyl diphosphate + UDP + H(+)</text>
        <dbReference type="Rhea" id="RHEA:28366"/>
        <dbReference type="ChEBI" id="CHEBI:15378"/>
        <dbReference type="ChEBI" id="CHEBI:58223"/>
        <dbReference type="ChEBI" id="CHEBI:61495"/>
        <dbReference type="ChEBI" id="CHEBI:62959"/>
        <dbReference type="ChEBI" id="CHEBI:70731"/>
        <dbReference type="EC" id="2.4.1.180"/>
    </reaction>
</comment>
<comment type="pathway">
    <text evidence="1">Bacterial outer membrane biogenesis; enterobacterial common antigen biosynthesis.</text>
</comment>
<comment type="similarity">
    <text evidence="1">Belongs to the glycosyltransferase 26 family.</text>
</comment>
<evidence type="ECO:0000255" key="1">
    <source>
        <dbReference type="HAMAP-Rule" id="MF_01001"/>
    </source>
</evidence>
<protein>
    <recommendedName>
        <fullName evidence="1">UDP-N-acetyl-D-mannosaminuronic acid transferase</fullName>
        <shortName evidence="1">UDP-ManNAcA transferase</shortName>
        <ecNumber evidence="1">2.4.1.180</ecNumber>
    </recommendedName>
</protein>
<organism>
    <name type="scientific">Photorhabdus laumondii subsp. laumondii (strain DSM 15139 / CIP 105565 / TT01)</name>
    <name type="common">Photorhabdus luminescens subsp. laumondii</name>
    <dbReference type="NCBI Taxonomy" id="243265"/>
    <lineage>
        <taxon>Bacteria</taxon>
        <taxon>Pseudomonadati</taxon>
        <taxon>Pseudomonadota</taxon>
        <taxon>Gammaproteobacteria</taxon>
        <taxon>Enterobacterales</taxon>
        <taxon>Morganellaceae</taxon>
        <taxon>Photorhabdus</taxon>
    </lineage>
</organism>
<gene>
    <name evidence="1" type="primary">wecG</name>
    <name evidence="1" type="synonym">rffM</name>
    <name type="ordered locus">plu4651</name>
</gene>
<sequence>MELNNIPKYSIRGLNIWGFRDMAHFLDHIFQREQVKTGTMVAINAEKVLTAEEDTALSTLLSDAEYLYADGISIVRAIRRKYPDTEVSRVAGADLWEAIMERAGKEGTPIFLVGGKPEILKQTESKLRAQWNVNIVGSQNGYFTPEERNAVFERIHASGAVIVTVAMGSPKQEIFMRDCRKIHSNALYMGVGGTYDVFTGHVKRAPKAWQNLGLEWLYRLLSQPSRIRRQFKLLKFIGYYYSGRL</sequence>
<feature type="chain" id="PRO_0000208430" description="UDP-N-acetyl-D-mannosaminuronic acid transferase">
    <location>
        <begin position="1"/>
        <end position="245"/>
    </location>
</feature>
<reference key="1">
    <citation type="journal article" date="2003" name="Nat. Biotechnol.">
        <title>The genome sequence of the entomopathogenic bacterium Photorhabdus luminescens.</title>
        <authorList>
            <person name="Duchaud E."/>
            <person name="Rusniok C."/>
            <person name="Frangeul L."/>
            <person name="Buchrieser C."/>
            <person name="Givaudan A."/>
            <person name="Taourit S."/>
            <person name="Bocs S."/>
            <person name="Boursaux-Eude C."/>
            <person name="Chandler M."/>
            <person name="Charles J.-F."/>
            <person name="Dassa E."/>
            <person name="Derose R."/>
            <person name="Derzelle S."/>
            <person name="Freyssinet G."/>
            <person name="Gaudriault S."/>
            <person name="Medigue C."/>
            <person name="Lanois A."/>
            <person name="Powell K."/>
            <person name="Siguier P."/>
            <person name="Vincent R."/>
            <person name="Wingate V."/>
            <person name="Zouine M."/>
            <person name="Glaser P."/>
            <person name="Boemare N."/>
            <person name="Danchin A."/>
            <person name="Kunst F."/>
        </authorList>
    </citation>
    <scope>NUCLEOTIDE SEQUENCE [LARGE SCALE GENOMIC DNA]</scope>
    <source>
        <strain>DSM 15139 / CIP 105565 / TT01</strain>
    </source>
</reference>